<reference key="1">
    <citation type="journal article" date="2003" name="J. Bacteriol.">
        <title>Comparative analyses of the complete genome sequences of Pierce's disease and citrus variegated chlorosis strains of Xylella fastidiosa.</title>
        <authorList>
            <person name="Van Sluys M.A."/>
            <person name="de Oliveira M.C."/>
            <person name="Monteiro-Vitorello C.B."/>
            <person name="Miyaki C.Y."/>
            <person name="Furlan L.R."/>
            <person name="Camargo L.E.A."/>
            <person name="da Silva A.C.R."/>
            <person name="Moon D.H."/>
            <person name="Takita M.A."/>
            <person name="Lemos E.G.M."/>
            <person name="Machado M.A."/>
            <person name="Ferro M.I.T."/>
            <person name="da Silva F.R."/>
            <person name="Goldman M.H.S."/>
            <person name="Goldman G.H."/>
            <person name="Lemos M.V.F."/>
            <person name="El-Dorry H."/>
            <person name="Tsai S.M."/>
            <person name="Carrer H."/>
            <person name="Carraro D.M."/>
            <person name="de Oliveira R.C."/>
            <person name="Nunes L.R."/>
            <person name="Siqueira W.J."/>
            <person name="Coutinho L.L."/>
            <person name="Kimura E.T."/>
            <person name="Ferro E.S."/>
            <person name="Harakava R."/>
            <person name="Kuramae E.E."/>
            <person name="Marino C.L."/>
            <person name="Giglioti E."/>
            <person name="Abreu I.L."/>
            <person name="Alves L.M.C."/>
            <person name="do Amaral A.M."/>
            <person name="Baia G.S."/>
            <person name="Blanco S.R."/>
            <person name="Brito M.S."/>
            <person name="Cannavan F.S."/>
            <person name="Celestino A.V."/>
            <person name="da Cunha A.F."/>
            <person name="Fenille R.C."/>
            <person name="Ferro J.A."/>
            <person name="Formighieri E.F."/>
            <person name="Kishi L.T."/>
            <person name="Leoni S.G."/>
            <person name="Oliveira A.R."/>
            <person name="Rosa V.E. Jr."/>
            <person name="Sassaki F.T."/>
            <person name="Sena J.A.D."/>
            <person name="de Souza A.A."/>
            <person name="Truffi D."/>
            <person name="Tsukumo F."/>
            <person name="Yanai G.M."/>
            <person name="Zaros L.G."/>
            <person name="Civerolo E.L."/>
            <person name="Simpson A.J.G."/>
            <person name="Almeida N.F. Jr."/>
            <person name="Setubal J.C."/>
            <person name="Kitajima J.P."/>
        </authorList>
    </citation>
    <scope>NUCLEOTIDE SEQUENCE [LARGE SCALE GENOMIC DNA]</scope>
    <source>
        <strain>Temecula1 / ATCC 700964</strain>
    </source>
</reference>
<proteinExistence type="inferred from homology"/>
<sequence>MIGRLRGVLTSKTPPWLVVDVCGVGYELEVPMSTFCELPDVGYEVNLFTHYTQKDDSAALYGFLSESERRLFRHLQRVSGIGTKIALAILSSVSVDTFAGLIQAGDANALTVIPGVGKKTAERMLVELRDRAADFNNGISTSGKLNLDTVSEAALALQQLGYKPAEAARMARDAGTESDDVAIVIKKALQTVLR</sequence>
<accession>Q87D02</accession>
<name>RUVA_XYLFT</name>
<evidence type="ECO:0000255" key="1">
    <source>
        <dbReference type="HAMAP-Rule" id="MF_00031"/>
    </source>
</evidence>
<feature type="chain" id="PRO_0000094715" description="Holliday junction branch migration complex subunit RuvA">
    <location>
        <begin position="1"/>
        <end position="194"/>
    </location>
</feature>
<feature type="region of interest" description="Domain I" evidence="1">
    <location>
        <begin position="1"/>
        <end position="64"/>
    </location>
</feature>
<feature type="region of interest" description="Domain II" evidence="1">
    <location>
        <begin position="65"/>
        <end position="140"/>
    </location>
</feature>
<feature type="region of interest" description="Flexible linker" evidence="1">
    <location>
        <begin position="140"/>
        <end position="144"/>
    </location>
</feature>
<feature type="region of interest" description="Domain III" evidence="1">
    <location>
        <begin position="145"/>
        <end position="194"/>
    </location>
</feature>
<dbReference type="EMBL" id="AE009442">
    <property type="protein sequence ID" value="AAO28752.1"/>
    <property type="molecule type" value="Genomic_DNA"/>
</dbReference>
<dbReference type="RefSeq" id="WP_004572897.1">
    <property type="nucleotide sequence ID" value="NC_004556.1"/>
</dbReference>
<dbReference type="SMR" id="Q87D02"/>
<dbReference type="GeneID" id="93904678"/>
<dbReference type="KEGG" id="xft:PD_0887"/>
<dbReference type="HOGENOM" id="CLU_087936_0_0_6"/>
<dbReference type="Proteomes" id="UP000002516">
    <property type="component" value="Chromosome"/>
</dbReference>
<dbReference type="GO" id="GO:0005737">
    <property type="term" value="C:cytoplasm"/>
    <property type="evidence" value="ECO:0007669"/>
    <property type="project" value="UniProtKB-SubCell"/>
</dbReference>
<dbReference type="GO" id="GO:0009379">
    <property type="term" value="C:Holliday junction helicase complex"/>
    <property type="evidence" value="ECO:0007669"/>
    <property type="project" value="InterPro"/>
</dbReference>
<dbReference type="GO" id="GO:0048476">
    <property type="term" value="C:Holliday junction resolvase complex"/>
    <property type="evidence" value="ECO:0007669"/>
    <property type="project" value="UniProtKB-UniRule"/>
</dbReference>
<dbReference type="GO" id="GO:0005524">
    <property type="term" value="F:ATP binding"/>
    <property type="evidence" value="ECO:0007669"/>
    <property type="project" value="InterPro"/>
</dbReference>
<dbReference type="GO" id="GO:0000400">
    <property type="term" value="F:four-way junction DNA binding"/>
    <property type="evidence" value="ECO:0007669"/>
    <property type="project" value="UniProtKB-UniRule"/>
</dbReference>
<dbReference type="GO" id="GO:0009378">
    <property type="term" value="F:four-way junction helicase activity"/>
    <property type="evidence" value="ECO:0007669"/>
    <property type="project" value="InterPro"/>
</dbReference>
<dbReference type="GO" id="GO:0006310">
    <property type="term" value="P:DNA recombination"/>
    <property type="evidence" value="ECO:0007669"/>
    <property type="project" value="UniProtKB-UniRule"/>
</dbReference>
<dbReference type="GO" id="GO:0006281">
    <property type="term" value="P:DNA repair"/>
    <property type="evidence" value="ECO:0007669"/>
    <property type="project" value="UniProtKB-UniRule"/>
</dbReference>
<dbReference type="CDD" id="cd14332">
    <property type="entry name" value="UBA_RuvA_C"/>
    <property type="match status" value="1"/>
</dbReference>
<dbReference type="Gene3D" id="1.10.150.20">
    <property type="entry name" value="5' to 3' exonuclease, C-terminal subdomain"/>
    <property type="match status" value="1"/>
</dbReference>
<dbReference type="Gene3D" id="1.10.8.10">
    <property type="entry name" value="DNA helicase RuvA subunit, C-terminal domain"/>
    <property type="match status" value="1"/>
</dbReference>
<dbReference type="Gene3D" id="2.40.50.140">
    <property type="entry name" value="Nucleic acid-binding proteins"/>
    <property type="match status" value="1"/>
</dbReference>
<dbReference type="HAMAP" id="MF_00031">
    <property type="entry name" value="DNA_HJ_migration_RuvA"/>
    <property type="match status" value="1"/>
</dbReference>
<dbReference type="InterPro" id="IPR013849">
    <property type="entry name" value="DNA_helicase_Holl-junc_RuvA_I"/>
</dbReference>
<dbReference type="InterPro" id="IPR003583">
    <property type="entry name" value="Hlx-hairpin-Hlx_DNA-bd_motif"/>
</dbReference>
<dbReference type="InterPro" id="IPR012340">
    <property type="entry name" value="NA-bd_OB-fold"/>
</dbReference>
<dbReference type="InterPro" id="IPR000085">
    <property type="entry name" value="RuvA"/>
</dbReference>
<dbReference type="InterPro" id="IPR010994">
    <property type="entry name" value="RuvA_2-like"/>
</dbReference>
<dbReference type="InterPro" id="IPR011114">
    <property type="entry name" value="RuvA_C"/>
</dbReference>
<dbReference type="InterPro" id="IPR036267">
    <property type="entry name" value="RuvA_C_sf"/>
</dbReference>
<dbReference type="NCBIfam" id="TIGR00084">
    <property type="entry name" value="ruvA"/>
    <property type="match status" value="1"/>
</dbReference>
<dbReference type="Pfam" id="PF14520">
    <property type="entry name" value="HHH_5"/>
    <property type="match status" value="1"/>
</dbReference>
<dbReference type="Pfam" id="PF07499">
    <property type="entry name" value="RuvA_C"/>
    <property type="match status" value="1"/>
</dbReference>
<dbReference type="Pfam" id="PF01330">
    <property type="entry name" value="RuvA_N"/>
    <property type="match status" value="1"/>
</dbReference>
<dbReference type="SMART" id="SM00278">
    <property type="entry name" value="HhH1"/>
    <property type="match status" value="2"/>
</dbReference>
<dbReference type="SUPFAM" id="SSF46929">
    <property type="entry name" value="DNA helicase RuvA subunit, C-terminal domain"/>
    <property type="match status" value="1"/>
</dbReference>
<dbReference type="SUPFAM" id="SSF50249">
    <property type="entry name" value="Nucleic acid-binding proteins"/>
    <property type="match status" value="1"/>
</dbReference>
<dbReference type="SUPFAM" id="SSF47781">
    <property type="entry name" value="RuvA domain 2-like"/>
    <property type="match status" value="1"/>
</dbReference>
<protein>
    <recommendedName>
        <fullName evidence="1">Holliday junction branch migration complex subunit RuvA</fullName>
    </recommendedName>
</protein>
<comment type="function">
    <text evidence="1">The RuvA-RuvB-RuvC complex processes Holliday junction (HJ) DNA during genetic recombination and DNA repair, while the RuvA-RuvB complex plays an important role in the rescue of blocked DNA replication forks via replication fork reversal (RFR). RuvA specifically binds to HJ cruciform DNA, conferring on it an open structure. The RuvB hexamer acts as an ATP-dependent pump, pulling dsDNA into and through the RuvAB complex. HJ branch migration allows RuvC to scan DNA until it finds its consensus sequence, where it cleaves and resolves the cruciform DNA.</text>
</comment>
<comment type="subunit">
    <text evidence="1">Homotetramer. Forms an RuvA(8)-RuvB(12)-Holliday junction (HJ) complex. HJ DNA is sandwiched between 2 RuvA tetramers; dsDNA enters through RuvA and exits via RuvB. An RuvB hexamer assembles on each DNA strand where it exits the tetramer. Each RuvB hexamer is contacted by two RuvA subunits (via domain III) on 2 adjacent RuvB subunits; this complex drives branch migration. In the full resolvosome a probable DNA-RuvA(4)-RuvB(12)-RuvC(2) complex forms which resolves the HJ.</text>
</comment>
<comment type="subcellular location">
    <subcellularLocation>
        <location evidence="1">Cytoplasm</location>
    </subcellularLocation>
</comment>
<comment type="domain">
    <text evidence="1">Has three domains with a flexible linker between the domains II and III and assumes an 'L' shape. Domain III is highly mobile and contacts RuvB.</text>
</comment>
<comment type="similarity">
    <text evidence="1">Belongs to the RuvA family.</text>
</comment>
<organism>
    <name type="scientific">Xylella fastidiosa (strain Temecula1 / ATCC 700964)</name>
    <dbReference type="NCBI Taxonomy" id="183190"/>
    <lineage>
        <taxon>Bacteria</taxon>
        <taxon>Pseudomonadati</taxon>
        <taxon>Pseudomonadota</taxon>
        <taxon>Gammaproteobacteria</taxon>
        <taxon>Lysobacterales</taxon>
        <taxon>Lysobacteraceae</taxon>
        <taxon>Xylella</taxon>
    </lineage>
</organism>
<gene>
    <name evidence="1" type="primary">ruvA</name>
    <name type="ordered locus">PD_0887</name>
</gene>
<keyword id="KW-0963">Cytoplasm</keyword>
<keyword id="KW-0227">DNA damage</keyword>
<keyword id="KW-0233">DNA recombination</keyword>
<keyword id="KW-0234">DNA repair</keyword>
<keyword id="KW-0238">DNA-binding</keyword>
<keyword id="KW-1185">Reference proteome</keyword>